<feature type="chain" id="PRO_0000341314" description="Nitric oxide reductase FlRd-NAD(+) reductase">
    <location>
        <begin position="1"/>
        <end position="377"/>
    </location>
</feature>
<gene>
    <name type="primary">norW</name>
    <name type="synonym">flrR</name>
    <name type="ordered locus">ECDH10B_2879</name>
</gene>
<evidence type="ECO:0000250" key="1"/>
<evidence type="ECO:0000269" key="2">
    <source>
    </source>
</evidence>
<evidence type="ECO:0000305" key="3"/>
<keyword id="KW-0963">Cytoplasm</keyword>
<keyword id="KW-0274">FAD</keyword>
<keyword id="KW-0285">Flavoprotein</keyword>
<keyword id="KW-0520">NAD</keyword>
<keyword id="KW-0560">Oxidoreductase</keyword>
<name>NORW_ECODH</name>
<comment type="function">
    <text evidence="1 2">One of at least two accessory proteins for anaerobic nitric oxide (NO) reductase. Reduces the rubredoxin moiety of NO reductase (By similarity).</text>
</comment>
<comment type="catalytic activity">
    <reaction>
        <text>2 reduced [nitric oxide reductase rubredoxin domain] + NAD(+) + H(+) = 2 oxidized [nitric oxide reductase rubredoxin domain] + NADH</text>
        <dbReference type="Rhea" id="RHEA:42960"/>
        <dbReference type="Rhea" id="RHEA-COMP:10304"/>
        <dbReference type="Rhea" id="RHEA-COMP:10305"/>
        <dbReference type="ChEBI" id="CHEBI:15378"/>
        <dbReference type="ChEBI" id="CHEBI:29033"/>
        <dbReference type="ChEBI" id="CHEBI:29034"/>
        <dbReference type="ChEBI" id="CHEBI:57540"/>
        <dbReference type="ChEBI" id="CHEBI:57945"/>
    </reaction>
</comment>
<comment type="cofactor">
    <cofactor evidence="1">
        <name>FAD</name>
        <dbReference type="ChEBI" id="CHEBI:57692"/>
    </cofactor>
</comment>
<comment type="pathway">
    <text>Nitrogen metabolism; nitric oxide reduction.</text>
</comment>
<comment type="subcellular location">
    <subcellularLocation>
        <location evidence="1">Cytoplasm</location>
    </subcellularLocation>
</comment>
<comment type="similarity">
    <text evidence="3">Belongs to the FAD-dependent oxidoreductase family.</text>
</comment>
<accession>B1XCN8</accession>
<reference key="1">
    <citation type="journal article" date="2008" name="J. Bacteriol.">
        <title>The complete genome sequence of Escherichia coli DH10B: insights into the biology of a laboratory workhorse.</title>
        <authorList>
            <person name="Durfee T."/>
            <person name="Nelson R."/>
            <person name="Baldwin S."/>
            <person name="Plunkett G. III"/>
            <person name="Burland V."/>
            <person name="Mau B."/>
            <person name="Petrosino J.F."/>
            <person name="Qin X."/>
            <person name="Muzny D.M."/>
            <person name="Ayele M."/>
            <person name="Gibbs R.A."/>
            <person name="Csorgo B."/>
            <person name="Posfai G."/>
            <person name="Weinstock G.M."/>
            <person name="Blattner F.R."/>
        </authorList>
    </citation>
    <scope>NUCLEOTIDE SEQUENCE [LARGE SCALE GENOMIC DNA]</scope>
    <source>
        <strain>K12 / DH10B</strain>
    </source>
</reference>
<reference key="2">
    <citation type="journal article" date="2002" name="J. Bacteriol.">
        <title>The NorR protein of Escherichia coli activates expression of the flavorubredoxin gene norV in response to reactive nitrogen species.</title>
        <authorList>
            <person name="Hutchings M.I."/>
            <person name="Mandhana N."/>
            <person name="Spiro S."/>
        </authorList>
    </citation>
    <scope>FUNCTION</scope>
</reference>
<organism>
    <name type="scientific">Escherichia coli (strain K12 / DH10B)</name>
    <dbReference type="NCBI Taxonomy" id="316385"/>
    <lineage>
        <taxon>Bacteria</taxon>
        <taxon>Pseudomonadati</taxon>
        <taxon>Pseudomonadota</taxon>
        <taxon>Gammaproteobacteria</taxon>
        <taxon>Enterobacterales</taxon>
        <taxon>Enterobacteriaceae</taxon>
        <taxon>Escherichia</taxon>
    </lineage>
</organism>
<proteinExistence type="inferred from homology"/>
<protein>
    <recommendedName>
        <fullName>Nitric oxide reductase FlRd-NAD(+) reductase</fullName>
        <ecNumber>1.18.1.-</ecNumber>
    </recommendedName>
    <alternativeName>
        <fullName>Flavorubredoxin reductase</fullName>
        <shortName>FlRd-reductase</shortName>
        <shortName>FlavoRb reductase</shortName>
    </alternativeName>
</protein>
<dbReference type="EC" id="1.18.1.-"/>
<dbReference type="EMBL" id="CP000948">
    <property type="protein sequence ID" value="ACB03829.1"/>
    <property type="molecule type" value="Genomic_DNA"/>
</dbReference>
<dbReference type="RefSeq" id="WP_000064752.1">
    <property type="nucleotide sequence ID" value="NC_010473.1"/>
</dbReference>
<dbReference type="SMR" id="B1XCN8"/>
<dbReference type="KEGG" id="ecd:ECDH10B_2879"/>
<dbReference type="HOGENOM" id="CLU_003291_4_4_6"/>
<dbReference type="UniPathway" id="UPA00638"/>
<dbReference type="GO" id="GO:0005737">
    <property type="term" value="C:cytoplasm"/>
    <property type="evidence" value="ECO:0007669"/>
    <property type="project" value="UniProtKB-SubCell"/>
</dbReference>
<dbReference type="GO" id="GO:0016731">
    <property type="term" value="F:oxidoreductase activity, acting on iron-sulfur proteins as donors, NAD or NADP as acceptor"/>
    <property type="evidence" value="ECO:0007669"/>
    <property type="project" value="UniProtKB-UniRule"/>
</dbReference>
<dbReference type="FunFam" id="3.30.390.120:FF:000001">
    <property type="entry name" value="Nitric oxide reductase FlRd-NAD(+) reductase"/>
    <property type="match status" value="1"/>
</dbReference>
<dbReference type="FunFam" id="3.50.50.60:FF:000075">
    <property type="entry name" value="Nitric oxide reductase FlRd-NAD(+) reductase"/>
    <property type="match status" value="1"/>
</dbReference>
<dbReference type="Gene3D" id="3.30.390.120">
    <property type="match status" value="1"/>
</dbReference>
<dbReference type="Gene3D" id="3.50.50.60">
    <property type="entry name" value="FAD/NAD(P)-binding domain"/>
    <property type="match status" value="2"/>
</dbReference>
<dbReference type="HAMAP" id="MF_01313">
    <property type="entry name" value="NorW"/>
    <property type="match status" value="1"/>
</dbReference>
<dbReference type="InterPro" id="IPR050260">
    <property type="entry name" value="FAD-bd_OxRdtase"/>
</dbReference>
<dbReference type="InterPro" id="IPR036188">
    <property type="entry name" value="FAD/NAD-bd_sf"/>
</dbReference>
<dbReference type="InterPro" id="IPR023753">
    <property type="entry name" value="FAD/NAD-binding_dom"/>
</dbReference>
<dbReference type="InterPro" id="IPR023961">
    <property type="entry name" value="NO_rdtase_NorW"/>
</dbReference>
<dbReference type="InterPro" id="IPR041364">
    <property type="entry name" value="Rbx-bd"/>
</dbReference>
<dbReference type="NCBIfam" id="NF003437">
    <property type="entry name" value="PRK04965.1"/>
    <property type="match status" value="1"/>
</dbReference>
<dbReference type="PANTHER" id="PTHR43429:SF3">
    <property type="entry name" value="NITRITE REDUCTASE [NAD(P)H]"/>
    <property type="match status" value="1"/>
</dbReference>
<dbReference type="PANTHER" id="PTHR43429">
    <property type="entry name" value="PYRIDINE NUCLEOTIDE-DISULFIDE OXIDOREDUCTASE DOMAIN-CONTAINING"/>
    <property type="match status" value="1"/>
</dbReference>
<dbReference type="Pfam" id="PF07992">
    <property type="entry name" value="Pyr_redox_2"/>
    <property type="match status" value="1"/>
</dbReference>
<dbReference type="Pfam" id="PF18113">
    <property type="entry name" value="Rbx_binding"/>
    <property type="match status" value="1"/>
</dbReference>
<dbReference type="PRINTS" id="PR00368">
    <property type="entry name" value="FADPNR"/>
</dbReference>
<dbReference type="PRINTS" id="PR00411">
    <property type="entry name" value="PNDRDTASEI"/>
</dbReference>
<dbReference type="SUPFAM" id="SSF51905">
    <property type="entry name" value="FAD/NAD(P)-binding domain"/>
    <property type="match status" value="1"/>
</dbReference>
<sequence length="377" mass="41404">MSNGIVIIGSGFAARQLVKNIRKQDATIPLTLIAADSMDEYNKPDLSHVISQGQRADDLTRQTAGEFAEQFNLHLFPQTWVTDIDAEARVVKSQNNQWQYDKLVLATGASAFVPPVPGRELMLTLNSQQEYRACETQLRDARRVLIVGGGLIGSELAMDFCRAGKAVTLIDNAASILASLMPPEVSSRLQHRLTEMGVHLLLKSQLQGLEKTDSGIQATLDRQRNIEVDAVIAATGLRPETALARRAGLTINRGVCVDSYLQTSNTDIYALGDCAEINGQVLPFLQPIQLSAMVLAKNLLGNNTPLKLPAMLVKIKTPELPLHLAGETQRQDLRWQINTERQGMVARGVDDADQLRAFVVSEDRMKEAFGLLKTLPM</sequence>